<evidence type="ECO:0000255" key="1"/>
<evidence type="ECO:0000255" key="2">
    <source>
        <dbReference type="PROSITE-ProRule" id="PRU00521"/>
    </source>
</evidence>
<evidence type="ECO:0000269" key="3">
    <source>
    </source>
</evidence>
<evidence type="ECO:0000269" key="4">
    <source>
    </source>
</evidence>
<evidence type="ECO:0000269" key="5">
    <source>
    </source>
</evidence>
<evidence type="ECO:0000269" key="6">
    <source>
    </source>
</evidence>
<evidence type="ECO:0000305" key="7"/>
<evidence type="ECO:0007744" key="8">
    <source>
        <dbReference type="PDB" id="6LBG"/>
    </source>
</evidence>
<feature type="chain" id="PRO_0000150745" description="Olfactory receptor 51B2">
    <location>
        <begin position="1"/>
        <end position="312"/>
    </location>
</feature>
<feature type="topological domain" description="Extracellular" evidence="1">
    <location>
        <begin position="1"/>
        <end position="23"/>
    </location>
</feature>
<feature type="transmembrane region" description="Helical; Name=1" evidence="1">
    <location>
        <begin position="24"/>
        <end position="44"/>
    </location>
</feature>
<feature type="topological domain" description="Cytoplasmic" evidence="1">
    <location>
        <begin position="45"/>
        <end position="52"/>
    </location>
</feature>
<feature type="transmembrane region" description="Helical; Name=2" evidence="1">
    <location>
        <begin position="53"/>
        <end position="73"/>
    </location>
</feature>
<feature type="topological domain" description="Extracellular" evidence="1">
    <location>
        <begin position="74"/>
        <end position="97"/>
    </location>
</feature>
<feature type="transmembrane region" description="Helical; Name=3" evidence="1">
    <location>
        <begin position="98"/>
        <end position="118"/>
    </location>
</feature>
<feature type="topological domain" description="Cytoplasmic" evidence="1">
    <location>
        <begin position="119"/>
        <end position="137"/>
    </location>
</feature>
<feature type="transmembrane region" description="Helical; Name=4" evidence="1">
    <location>
        <begin position="138"/>
        <end position="158"/>
    </location>
</feature>
<feature type="topological domain" description="Extracellular" evidence="1">
    <location>
        <begin position="159"/>
        <end position="194"/>
    </location>
</feature>
<feature type="transmembrane region" description="Helical; Name=5" evidence="1">
    <location>
        <begin position="195"/>
        <end position="215"/>
    </location>
</feature>
<feature type="topological domain" description="Cytoplasmic" evidence="1">
    <location>
        <begin position="216"/>
        <end position="235"/>
    </location>
</feature>
<feature type="transmembrane region" description="Helical; Name=6" evidence="1">
    <location>
        <begin position="236"/>
        <end position="256"/>
    </location>
</feature>
<feature type="topological domain" description="Extracellular" evidence="1">
    <location>
        <begin position="257"/>
        <end position="271"/>
    </location>
</feature>
<feature type="transmembrane region" description="Helical; Name=7" evidence="1">
    <location>
        <begin position="272"/>
        <end position="292"/>
    </location>
</feature>
<feature type="topological domain" description="Cytoplasmic" evidence="1">
    <location>
        <begin position="293"/>
        <end position="312"/>
    </location>
</feature>
<feature type="glycosylation site" description="N-linked (GlcNAc...) asparagine" evidence="1">
    <location>
        <position position="4"/>
    </location>
</feature>
<feature type="disulfide bond" evidence="2">
    <location>
        <begin position="95"/>
        <end position="187"/>
    </location>
</feature>
<feature type="sequence variant" id="VAR_063114" description="In dbSNP:rs7952293." evidence="3 4">
    <original>C</original>
    <variation>R</variation>
    <location>
        <position position="120"/>
    </location>
</feature>
<feature type="sequence variant" id="VAR_063115" description="In dbSNP:rs10837814." evidence="3 4">
    <original>L</original>
    <variation>F</variation>
    <location>
        <position position="134"/>
    </location>
</feature>
<feature type="sequence variant" id="VAR_063116" description="In dbSNP:rs7937237." evidence="3 4 5">
    <original>C</original>
    <variation>S</variation>
    <location>
        <position position="209"/>
    </location>
</feature>
<feature type="sequence variant" id="VAR_057576" description="In dbSNP:rs11036815." evidence="5">
    <original>P</original>
    <variation>S</variation>
    <location>
        <position position="283"/>
    </location>
</feature>
<feature type="sequence variant" id="VAR_063117" description="In dbSNP:rs11036814." evidence="3">
    <original>S</original>
    <variation>R</variation>
    <location>
        <position position="312"/>
    </location>
</feature>
<sequence>MWPNITAAPFLLTGFPGLEAAHHWISIPFFAVYVCILLGNGMLLYLIKHDHSLHEPMYYFLTMLAGTDLMVTLTTMPTVMGILWVNHREISSVGCFLQAYFIHSLSVVESGSLLAMAYDCFIAIRNPLRYASILTNTRVIALGVGVFLRGFVSILPVILRLFSFSYCKSHVITRAFCLHQEIMRLACADITFNRLYPVILISLTIFLDCLIILFSYILILNTVIGIASGEERAKALNTCISHISCVLIFYVTVMGLTFIYRFGKNVPEVVHIIMSYIYFLFPPLMNPVIYSIKTKQIQYGIIRLLSKHRFSS</sequence>
<keyword id="KW-0002">3D-structure</keyword>
<keyword id="KW-1003">Cell membrane</keyword>
<keyword id="KW-1015">Disulfide bond</keyword>
<keyword id="KW-0297">G-protein coupled receptor</keyword>
<keyword id="KW-0325">Glycoprotein</keyword>
<keyword id="KW-0472">Membrane</keyword>
<keyword id="KW-0552">Olfaction</keyword>
<keyword id="KW-0675">Receptor</keyword>
<keyword id="KW-1185">Reference proteome</keyword>
<keyword id="KW-0716">Sensory transduction</keyword>
<keyword id="KW-0807">Transducer</keyword>
<keyword id="KW-0812">Transmembrane</keyword>
<keyword id="KW-1133">Transmembrane helix</keyword>
<keyword id="KW-0832">Ubl conjugation</keyword>
<accession>Q9Y5P1</accession>
<accession>Q17R53</accession>
<accession>Q96RD4</accession>
<gene>
    <name type="primary">OR51B2</name>
    <name type="synonym">OR51B1P</name>
</gene>
<dbReference type="EMBL" id="AF137396">
    <property type="protein sequence ID" value="AAD29425.2"/>
    <property type="molecule type" value="Genomic_DNA"/>
</dbReference>
<dbReference type="EMBL" id="AC104389">
    <property type="status" value="NOT_ANNOTATED_CDS"/>
    <property type="molecule type" value="Genomic_DNA"/>
</dbReference>
<dbReference type="EMBL" id="BC117461">
    <property type="protein sequence ID" value="AAI17462.1"/>
    <property type="molecule type" value="mRNA"/>
</dbReference>
<dbReference type="EMBL" id="AF399503">
    <property type="protein sequence ID" value="AAK94988.1"/>
    <property type="molecule type" value="Genomic_DNA"/>
</dbReference>
<dbReference type="RefSeq" id="NP_149420.4">
    <property type="nucleotide sequence ID" value="NM_033180.5"/>
</dbReference>
<dbReference type="PDB" id="6LBG">
    <property type="method" value="X-ray"/>
    <property type="resolution" value="2.51 A"/>
    <property type="chains" value="A/B=303-311"/>
</dbReference>
<dbReference type="PDBsum" id="6LBG"/>
<dbReference type="SMR" id="Q9Y5P1"/>
<dbReference type="BioGRID" id="122650">
    <property type="interactions" value="1"/>
</dbReference>
<dbReference type="FunCoup" id="Q9Y5P1">
    <property type="interactions" value="445"/>
</dbReference>
<dbReference type="STRING" id="9606.ENSP00000485407"/>
<dbReference type="GlyCosmos" id="Q9Y5P1">
    <property type="glycosylation" value="1 site, No reported glycans"/>
</dbReference>
<dbReference type="GlyGen" id="Q9Y5P1">
    <property type="glycosylation" value="2 sites, 1 O-linked glycan (1 site)"/>
</dbReference>
<dbReference type="iPTMnet" id="Q9Y5P1"/>
<dbReference type="PhosphoSitePlus" id="Q9Y5P1"/>
<dbReference type="BioMuta" id="OR51B2"/>
<dbReference type="DMDM" id="296439490"/>
<dbReference type="jPOST" id="Q9Y5P1"/>
<dbReference type="PaxDb" id="9606-ENSP00000327540"/>
<dbReference type="ProteomicsDB" id="86458"/>
<dbReference type="Antibodypedia" id="78942">
    <property type="antibodies" value="40 antibodies from 13 providers"/>
</dbReference>
<dbReference type="DNASU" id="79345"/>
<dbReference type="Ensembl" id="ENST00000624187.1">
    <property type="protein sequence ID" value="ENSP00000485407.1"/>
    <property type="gene ID" value="ENSG00000279012.2"/>
</dbReference>
<dbReference type="GeneID" id="79345"/>
<dbReference type="KEGG" id="hsa:79345"/>
<dbReference type="MANE-Select" id="ENST00000624187.1">
    <property type="protein sequence ID" value="ENSP00000485407.1"/>
    <property type="RefSeq nucleotide sequence ID" value="NM_033180.5"/>
    <property type="RefSeq protein sequence ID" value="NP_149420.4"/>
</dbReference>
<dbReference type="UCSC" id="uc001mao.2">
    <property type="organism name" value="human"/>
</dbReference>
<dbReference type="AGR" id="HGNC:14703"/>
<dbReference type="CTD" id="79345"/>
<dbReference type="GeneCards" id="OR51B2"/>
<dbReference type="HGNC" id="HGNC:14703">
    <property type="gene designation" value="OR51B2"/>
</dbReference>
<dbReference type="HPA" id="ENSG00000279012">
    <property type="expression patterns" value="Not detected"/>
</dbReference>
<dbReference type="neXtProt" id="NX_Q9Y5P1"/>
<dbReference type="PharmGKB" id="PA32364"/>
<dbReference type="VEuPathDB" id="HostDB:ENSG00000279012"/>
<dbReference type="eggNOG" id="ENOG502TAGS">
    <property type="taxonomic scope" value="Eukaryota"/>
</dbReference>
<dbReference type="GeneTree" id="ENSGT01130000278299"/>
<dbReference type="HOGENOM" id="CLU_012526_0_0_1"/>
<dbReference type="InParanoid" id="Q9Y5P1"/>
<dbReference type="OMA" id="ILWVNHR"/>
<dbReference type="OrthoDB" id="9444602at2759"/>
<dbReference type="PAN-GO" id="Q9Y5P1">
    <property type="GO annotations" value="2 GO annotations based on evolutionary models"/>
</dbReference>
<dbReference type="PhylomeDB" id="Q9Y5P1"/>
<dbReference type="TreeFam" id="TF342735"/>
<dbReference type="PathwayCommons" id="Q9Y5P1"/>
<dbReference type="Reactome" id="R-HSA-9752946">
    <property type="pathway name" value="Expression and translocation of olfactory receptors"/>
</dbReference>
<dbReference type="BioGRID-ORCS" id="79345">
    <property type="hits" value="6 hits in 742 CRISPR screens"/>
</dbReference>
<dbReference type="GeneWiki" id="OR51B2"/>
<dbReference type="GenomeRNAi" id="79345"/>
<dbReference type="Pharos" id="Q9Y5P1">
    <property type="development level" value="Tdark"/>
</dbReference>
<dbReference type="PRO" id="PR:Q9Y5P1"/>
<dbReference type="Proteomes" id="UP000005640">
    <property type="component" value="Chromosome 11"/>
</dbReference>
<dbReference type="RNAct" id="Q9Y5P1">
    <property type="molecule type" value="protein"/>
</dbReference>
<dbReference type="Bgee" id="ENSG00000279012">
    <property type="expression patterns" value="Expressed in tibialis anterior and 6 other cell types or tissues"/>
</dbReference>
<dbReference type="ExpressionAtlas" id="Q9Y5P1">
    <property type="expression patterns" value="baseline and differential"/>
</dbReference>
<dbReference type="GO" id="GO:0005886">
    <property type="term" value="C:plasma membrane"/>
    <property type="evidence" value="ECO:0000318"/>
    <property type="project" value="GO_Central"/>
</dbReference>
<dbReference type="GO" id="GO:0004930">
    <property type="term" value="F:G protein-coupled receptor activity"/>
    <property type="evidence" value="ECO:0007669"/>
    <property type="project" value="UniProtKB-KW"/>
</dbReference>
<dbReference type="GO" id="GO:0004984">
    <property type="term" value="F:olfactory receptor activity"/>
    <property type="evidence" value="ECO:0000318"/>
    <property type="project" value="GO_Central"/>
</dbReference>
<dbReference type="CDD" id="cd15222">
    <property type="entry name" value="7tmA_OR51-like"/>
    <property type="match status" value="1"/>
</dbReference>
<dbReference type="FunFam" id="1.20.1070.10:FF:000002">
    <property type="entry name" value="Olfactory receptor"/>
    <property type="match status" value="1"/>
</dbReference>
<dbReference type="Gene3D" id="1.20.1070.10">
    <property type="entry name" value="Rhodopsin 7-helix transmembrane proteins"/>
    <property type="match status" value="1"/>
</dbReference>
<dbReference type="InterPro" id="IPR000276">
    <property type="entry name" value="GPCR_Rhodpsn"/>
</dbReference>
<dbReference type="InterPro" id="IPR017452">
    <property type="entry name" value="GPCR_Rhodpsn_7TM"/>
</dbReference>
<dbReference type="InterPro" id="IPR000725">
    <property type="entry name" value="Olfact_rcpt"/>
</dbReference>
<dbReference type="InterPro" id="IPR050402">
    <property type="entry name" value="OR51/52/56-like"/>
</dbReference>
<dbReference type="PANTHER" id="PTHR26450:SF164">
    <property type="entry name" value="OLFACTORY RECEPTOR 51B2"/>
    <property type="match status" value="1"/>
</dbReference>
<dbReference type="PANTHER" id="PTHR26450">
    <property type="entry name" value="OLFACTORY RECEPTOR 56B1-RELATED"/>
    <property type="match status" value="1"/>
</dbReference>
<dbReference type="Pfam" id="PF13853">
    <property type="entry name" value="7tm_4"/>
    <property type="match status" value="1"/>
</dbReference>
<dbReference type="PRINTS" id="PR00237">
    <property type="entry name" value="GPCRRHODOPSN"/>
</dbReference>
<dbReference type="PRINTS" id="PR00245">
    <property type="entry name" value="OLFACTORYR"/>
</dbReference>
<dbReference type="SUPFAM" id="SSF81321">
    <property type="entry name" value="Family A G protein-coupled receptor-like"/>
    <property type="match status" value="1"/>
</dbReference>
<dbReference type="PROSITE" id="PS50262">
    <property type="entry name" value="G_PROTEIN_RECEP_F1_2"/>
    <property type="match status" value="1"/>
</dbReference>
<proteinExistence type="evidence at protein level"/>
<name>O51B2_HUMAN</name>
<protein>
    <recommendedName>
        <fullName>Olfactory receptor 51B2</fullName>
    </recommendedName>
    <alternativeName>
        <fullName>Odorant receptor HOR5'beta3</fullName>
    </alternativeName>
    <alternativeName>
        <fullName>Olfactory receptor 51B1</fullName>
    </alternativeName>
</protein>
<reference key="1">
    <citation type="journal article" date="1999" name="Proc. Natl. Acad. Sci. U.S.A.">
        <title>Conservation of sequence and structure flanking the mouse and human beta-globin loci: the beta-globin genes are embedded within an array of odorant receptor genes.</title>
        <authorList>
            <person name="Bulger M."/>
            <person name="van Doorninck J.H."/>
            <person name="Saitoh N."/>
            <person name="Telling A."/>
            <person name="Farrell C.M."/>
            <person name="Bender M.A."/>
            <person name="Felsenfeld G."/>
            <person name="Axel R."/>
            <person name="Groudine M."/>
        </authorList>
    </citation>
    <scope>NUCLEOTIDE SEQUENCE [GENOMIC DNA]</scope>
    <scope>VARIANTS ARG-120; PHE-134; SER-209 AND ARG-312</scope>
</reference>
<reference key="2">
    <citation type="journal article" date="1999" name="Proc. Natl. Acad. Sci. U.S.A.">
        <authorList>
            <person name="Bulger M."/>
            <person name="van Doorninck J.H."/>
            <person name="Saitoh N."/>
            <person name="Telling A."/>
            <person name="Farrell C.M."/>
            <person name="Bender M.A."/>
            <person name="Felsenfeld G."/>
            <person name="Axel R."/>
            <person name="Groudine M."/>
        </authorList>
    </citation>
    <scope>ERRATUM OF PUBMED:10220430</scope>
</reference>
<reference key="3">
    <citation type="journal article" date="2006" name="Nature">
        <title>Human chromosome 11 DNA sequence and analysis including novel gene identification.</title>
        <authorList>
            <person name="Taylor T.D."/>
            <person name="Noguchi H."/>
            <person name="Totoki Y."/>
            <person name="Toyoda A."/>
            <person name="Kuroki Y."/>
            <person name="Dewar K."/>
            <person name="Lloyd C."/>
            <person name="Itoh T."/>
            <person name="Takeda T."/>
            <person name="Kim D.-W."/>
            <person name="She X."/>
            <person name="Barlow K.F."/>
            <person name="Bloom T."/>
            <person name="Bruford E."/>
            <person name="Chang J.L."/>
            <person name="Cuomo C.A."/>
            <person name="Eichler E."/>
            <person name="FitzGerald M.G."/>
            <person name="Jaffe D.B."/>
            <person name="LaButti K."/>
            <person name="Nicol R."/>
            <person name="Park H.-S."/>
            <person name="Seaman C."/>
            <person name="Sougnez C."/>
            <person name="Yang X."/>
            <person name="Zimmer A.R."/>
            <person name="Zody M.C."/>
            <person name="Birren B.W."/>
            <person name="Nusbaum C."/>
            <person name="Fujiyama A."/>
            <person name="Hattori M."/>
            <person name="Rogers J."/>
            <person name="Lander E.S."/>
            <person name="Sakaki Y."/>
        </authorList>
    </citation>
    <scope>NUCLEOTIDE SEQUENCE [LARGE SCALE GENOMIC DNA]</scope>
</reference>
<reference key="4">
    <citation type="journal article" date="2004" name="Genome Res.">
        <title>The status, quality, and expansion of the NIH full-length cDNA project: the Mammalian Gene Collection (MGC).</title>
        <authorList>
            <consortium name="The MGC Project Team"/>
        </authorList>
    </citation>
    <scope>NUCLEOTIDE SEQUENCE [LARGE SCALE MRNA]</scope>
    <scope>VARIANTS SER-209 AND SER-283</scope>
    <source>
        <tissue>Brain</tissue>
    </source>
</reference>
<reference key="5">
    <citation type="journal article" date="2002" name="Genomics">
        <title>DEFOG: a practical scheme for deciphering families of genes.</title>
        <authorList>
            <person name="Fuchs T."/>
            <person name="Malecova B."/>
            <person name="Linhart C."/>
            <person name="Sharan R."/>
            <person name="Khen M."/>
            <person name="Herwig R."/>
            <person name="Shmulevich D."/>
            <person name="Elkon R."/>
            <person name="Steinfath M."/>
            <person name="O'Brien J.K."/>
            <person name="Radelof U."/>
            <person name="Lehrach H."/>
            <person name="Lancet D."/>
            <person name="Shamir R."/>
        </authorList>
    </citation>
    <scope>NUCLEOTIDE SEQUENCE [GENOMIC DNA] OF 66-283</scope>
    <scope>VARIANTS ARG-120; PHE-134 AND SER-209</scope>
</reference>
<reference evidence="8" key="6">
    <citation type="journal article" date="2021" name="Nat. Chem. Biol.">
        <title>Molecular basis for arginine C-terminal degron recognition by Cul2FEM1 E3 ligase.</title>
        <authorList>
            <person name="Chen X."/>
            <person name="Liao S."/>
            <person name="Makaros Y."/>
            <person name="Guo Q."/>
            <person name="Zhu Z."/>
            <person name="Krizelman R."/>
            <person name="Dahan K."/>
            <person name="Tu X."/>
            <person name="Yao X."/>
            <person name="Koren I."/>
            <person name="Xu C."/>
        </authorList>
    </citation>
    <scope>X-RAY CRYSTALLOGRAPHY (2.51 ANGSTROMS) OF 303-311 IN COMPLEX WITH FEM1C</scope>
    <scope>UBIQUITINATION</scope>
</reference>
<organism>
    <name type="scientific">Homo sapiens</name>
    <name type="common">Human</name>
    <dbReference type="NCBI Taxonomy" id="9606"/>
    <lineage>
        <taxon>Eukaryota</taxon>
        <taxon>Metazoa</taxon>
        <taxon>Chordata</taxon>
        <taxon>Craniata</taxon>
        <taxon>Vertebrata</taxon>
        <taxon>Euteleostomi</taxon>
        <taxon>Mammalia</taxon>
        <taxon>Eutheria</taxon>
        <taxon>Euarchontoglires</taxon>
        <taxon>Primates</taxon>
        <taxon>Haplorrhini</taxon>
        <taxon>Catarrhini</taxon>
        <taxon>Hominidae</taxon>
        <taxon>Homo</taxon>
    </lineage>
</organism>
<comment type="function">
    <text evidence="7">Odorant receptor.</text>
</comment>
<comment type="subcellular location">
    <subcellularLocation>
        <location>Cell membrane</location>
        <topology>Multi-pass membrane protein</topology>
    </subcellularLocation>
</comment>
<comment type="PTM">
    <text evidence="6">Ubiquitinated by the CRL2(FEM1A) and CRL2(FEM1C) complexes, which recognize the -Lys-Xaa-Xaa-Arg C-degron at the C-terminus, leading to its degradation.</text>
</comment>
<comment type="similarity">
    <text evidence="2">Belongs to the G-protein coupled receptor 1 family.</text>
</comment>
<comment type="online information" name="Human Olfactory Receptor Data Exploratorium (HORDE)">
    <link uri="http://genome.weizmann.ac.il/horde/card/index/symbol:OR51B2"/>
</comment>